<gene>
    <name type="primary">MCM3</name>
    <name type="ordered locus">Os05g0476200</name>
    <name type="ordered locus">LOC_Os05g39850</name>
    <name type="ORF">P0009H09</name>
</gene>
<evidence type="ECO:0000250" key="1"/>
<evidence type="ECO:0000256" key="2">
    <source>
        <dbReference type="SAM" id="MobiDB-lite"/>
    </source>
</evidence>
<evidence type="ECO:0000305" key="3"/>
<feature type="chain" id="PRO_0000425989" description="DNA replication licensing factor MCM3">
    <location>
        <begin position="1"/>
        <end position="770"/>
    </location>
</feature>
<feature type="domain" description="MCM">
    <location>
        <begin position="290"/>
        <end position="496"/>
    </location>
</feature>
<feature type="region of interest" description="Disordered" evidence="2">
    <location>
        <begin position="653"/>
        <end position="698"/>
    </location>
</feature>
<feature type="short sequence motif" description="Arginine finger">
    <location>
        <begin position="472"/>
        <end position="475"/>
    </location>
</feature>
<feature type="compositionally biased region" description="Basic and acidic residues" evidence="2">
    <location>
        <begin position="653"/>
        <end position="670"/>
    </location>
</feature>
<feature type="binding site" evidence="1">
    <location>
        <begin position="340"/>
        <end position="347"/>
    </location>
    <ligand>
        <name>ATP</name>
        <dbReference type="ChEBI" id="CHEBI:30616"/>
    </ligand>
</feature>
<reference key="1">
    <citation type="journal article" date="2005" name="Mol. Genet. Genomics">
        <title>A fine physical map of the rice chromosome 5.</title>
        <authorList>
            <person name="Cheng C.-H."/>
            <person name="Chung M.C."/>
            <person name="Liu S.-M."/>
            <person name="Chen S.-K."/>
            <person name="Kao F.Y."/>
            <person name="Lin S.-J."/>
            <person name="Hsiao S.-H."/>
            <person name="Tseng I.C."/>
            <person name="Hsing Y.-I.C."/>
            <person name="Wu H.-P."/>
            <person name="Chen C.-S."/>
            <person name="Shaw J.-F."/>
            <person name="Wu J."/>
            <person name="Matsumoto T."/>
            <person name="Sasaki T."/>
            <person name="Chen H.-C."/>
            <person name="Chow T.-Y."/>
        </authorList>
    </citation>
    <scope>NUCLEOTIDE SEQUENCE [LARGE SCALE GENOMIC DNA]</scope>
    <source>
        <strain>cv. Nipponbare</strain>
    </source>
</reference>
<reference key="2">
    <citation type="journal article" date="2005" name="Nature">
        <title>The map-based sequence of the rice genome.</title>
        <authorList>
            <consortium name="International rice genome sequencing project (IRGSP)"/>
        </authorList>
    </citation>
    <scope>NUCLEOTIDE SEQUENCE [LARGE SCALE GENOMIC DNA]</scope>
    <source>
        <strain>cv. Nipponbare</strain>
    </source>
</reference>
<reference key="3">
    <citation type="journal article" date="2008" name="Nucleic Acids Res.">
        <title>The rice annotation project database (RAP-DB): 2008 update.</title>
        <authorList>
            <consortium name="The rice annotation project (RAP)"/>
        </authorList>
    </citation>
    <scope>GENOME REANNOTATION</scope>
    <source>
        <strain>cv. Nipponbare</strain>
    </source>
</reference>
<reference key="4">
    <citation type="journal article" date="2013" name="Rice">
        <title>Improvement of the Oryza sativa Nipponbare reference genome using next generation sequence and optical map data.</title>
        <authorList>
            <person name="Kawahara Y."/>
            <person name="de la Bastide M."/>
            <person name="Hamilton J.P."/>
            <person name="Kanamori H."/>
            <person name="McCombie W.R."/>
            <person name="Ouyang S."/>
            <person name="Schwartz D.C."/>
            <person name="Tanaka T."/>
            <person name="Wu J."/>
            <person name="Zhou S."/>
            <person name="Childs K.L."/>
            <person name="Davidson R.M."/>
            <person name="Lin H."/>
            <person name="Quesada-Ocampo L."/>
            <person name="Vaillancourt B."/>
            <person name="Sakai H."/>
            <person name="Lee S.S."/>
            <person name="Kim J."/>
            <person name="Numa H."/>
            <person name="Itoh T."/>
            <person name="Buell C.R."/>
            <person name="Matsumoto T."/>
        </authorList>
    </citation>
    <scope>GENOME REANNOTATION</scope>
    <source>
        <strain>cv. Nipponbare</strain>
    </source>
</reference>
<reference key="5">
    <citation type="journal article" date="2003" name="Science">
        <title>Collection, mapping, and annotation of over 28,000 cDNA clones from japonica rice.</title>
        <authorList>
            <consortium name="The rice full-length cDNA consortium"/>
        </authorList>
    </citation>
    <scope>NUCLEOTIDE SEQUENCE [LARGE SCALE MRNA]</scope>
    <source>
        <strain>cv. Nipponbare</strain>
    </source>
</reference>
<reference key="6">
    <citation type="journal article" date="2007" name="Plant Physiol.">
        <title>Genome-wide analysis of the core DNA replication machinery in the higher plants Arabidopsis and rice.</title>
        <authorList>
            <person name="Shultz R.W."/>
            <person name="Tatineni V.M."/>
            <person name="Hanley-Bowdoin L."/>
            <person name="Thompson W.F."/>
        </authorList>
    </citation>
    <scope>GENE FAMILY</scope>
</reference>
<protein>
    <recommendedName>
        <fullName>DNA replication licensing factor MCM3</fullName>
        <ecNumber>3.6.4.12</ecNumber>
    </recommendedName>
    <alternativeName>
        <fullName>Minichromosome maintenance protein 3</fullName>
        <shortName>OsMCM3</shortName>
    </alternativeName>
</protein>
<accession>Q0DHC4</accession>
<accession>A0A0P0WNS4</accession>
<dbReference type="EC" id="3.6.4.12"/>
<dbReference type="EMBL" id="AC144743">
    <property type="status" value="NOT_ANNOTATED_CDS"/>
    <property type="molecule type" value="Genomic_DNA"/>
</dbReference>
<dbReference type="EMBL" id="AP008211">
    <property type="protein sequence ID" value="BAF17749.1"/>
    <property type="molecule type" value="Genomic_DNA"/>
</dbReference>
<dbReference type="EMBL" id="AP014961">
    <property type="protein sequence ID" value="BAS94532.1"/>
    <property type="molecule type" value="Genomic_DNA"/>
</dbReference>
<dbReference type="EMBL" id="AK063430">
    <property type="protein sequence ID" value="BAG88698.1"/>
    <property type="molecule type" value="mRNA"/>
</dbReference>
<dbReference type="EMBL" id="AK099369">
    <property type="protein sequence ID" value="BAG94091.1"/>
    <property type="molecule type" value="mRNA"/>
</dbReference>
<dbReference type="RefSeq" id="XP_015637328.1">
    <property type="nucleotide sequence ID" value="XM_015781842.1"/>
</dbReference>
<dbReference type="SMR" id="Q0DHC4"/>
<dbReference type="FunCoup" id="Q0DHC4">
    <property type="interactions" value="2512"/>
</dbReference>
<dbReference type="STRING" id="39947.Q0DHC4"/>
<dbReference type="PaxDb" id="39947-Q0DHC4"/>
<dbReference type="EnsemblPlants" id="Os05t0476200-01">
    <property type="protein sequence ID" value="Os05t0476200-01"/>
    <property type="gene ID" value="Os05g0476200"/>
</dbReference>
<dbReference type="EnsemblPlants" id="Os05t0476200-02">
    <property type="protein sequence ID" value="Os05t0476200-02"/>
    <property type="gene ID" value="Os05g0476200"/>
</dbReference>
<dbReference type="Gramene" id="Os05t0476200-01">
    <property type="protein sequence ID" value="Os05t0476200-01"/>
    <property type="gene ID" value="Os05g0476200"/>
</dbReference>
<dbReference type="Gramene" id="Os05t0476200-02">
    <property type="protein sequence ID" value="Os05t0476200-02"/>
    <property type="gene ID" value="Os05g0476200"/>
</dbReference>
<dbReference type="KEGG" id="dosa:Os05g0476200"/>
<dbReference type="eggNOG" id="KOG0479">
    <property type="taxonomic scope" value="Eukaryota"/>
</dbReference>
<dbReference type="HOGENOM" id="CLU_000995_6_0_1"/>
<dbReference type="InParanoid" id="Q0DHC4"/>
<dbReference type="OMA" id="NVYPQED"/>
<dbReference type="OrthoDB" id="1882346at2759"/>
<dbReference type="PlantReactome" id="R-OSA-9640882">
    <property type="pathway name" value="Assembly of pre-replication complex"/>
</dbReference>
<dbReference type="PlantReactome" id="R-OSA-9645850">
    <property type="pathway name" value="Activation of pre-replication complex"/>
</dbReference>
<dbReference type="PlantReactome" id="R-OSA-9675824">
    <property type="pathway name" value="DNA replication Initiation"/>
</dbReference>
<dbReference type="Proteomes" id="UP000000763">
    <property type="component" value="Chromosome 5"/>
</dbReference>
<dbReference type="Proteomes" id="UP000059680">
    <property type="component" value="Chromosome 5"/>
</dbReference>
<dbReference type="GO" id="GO:0000785">
    <property type="term" value="C:chromatin"/>
    <property type="evidence" value="ECO:0007669"/>
    <property type="project" value="EnsemblPlants"/>
</dbReference>
<dbReference type="GO" id="GO:0042555">
    <property type="term" value="C:MCM complex"/>
    <property type="evidence" value="ECO:0000318"/>
    <property type="project" value="GO_Central"/>
</dbReference>
<dbReference type="GO" id="GO:0005634">
    <property type="term" value="C:nucleus"/>
    <property type="evidence" value="ECO:0000318"/>
    <property type="project" value="GO_Central"/>
</dbReference>
<dbReference type="GO" id="GO:0000347">
    <property type="term" value="C:THO complex"/>
    <property type="evidence" value="ECO:0007669"/>
    <property type="project" value="EnsemblPlants"/>
</dbReference>
<dbReference type="GO" id="GO:0005524">
    <property type="term" value="F:ATP binding"/>
    <property type="evidence" value="ECO:0007669"/>
    <property type="project" value="UniProtKB-KW"/>
</dbReference>
<dbReference type="GO" id="GO:0016887">
    <property type="term" value="F:ATP hydrolysis activity"/>
    <property type="evidence" value="ECO:0007669"/>
    <property type="project" value="InterPro"/>
</dbReference>
<dbReference type="GO" id="GO:0004386">
    <property type="term" value="F:helicase activity"/>
    <property type="evidence" value="ECO:0007669"/>
    <property type="project" value="UniProtKB-KW"/>
</dbReference>
<dbReference type="GO" id="GO:0003697">
    <property type="term" value="F:single-stranded DNA binding"/>
    <property type="evidence" value="ECO:0000318"/>
    <property type="project" value="GO_Central"/>
</dbReference>
<dbReference type="GO" id="GO:0006271">
    <property type="term" value="P:DNA strand elongation involved in DNA replication"/>
    <property type="evidence" value="ECO:0000318"/>
    <property type="project" value="GO_Central"/>
</dbReference>
<dbReference type="GO" id="GO:0000727">
    <property type="term" value="P:double-strand break repair via break-induced replication"/>
    <property type="evidence" value="ECO:0000318"/>
    <property type="project" value="GO_Central"/>
</dbReference>
<dbReference type="GO" id="GO:1902975">
    <property type="term" value="P:mitotic DNA replication initiation"/>
    <property type="evidence" value="ECO:0000318"/>
    <property type="project" value="GO_Central"/>
</dbReference>
<dbReference type="CDD" id="cd17754">
    <property type="entry name" value="MCM3"/>
    <property type="match status" value="1"/>
</dbReference>
<dbReference type="FunFam" id="2.20.28.10:FF:000008">
    <property type="entry name" value="DNA helicase"/>
    <property type="match status" value="1"/>
</dbReference>
<dbReference type="FunFam" id="3.30.1640.10:FF:000012">
    <property type="entry name" value="DNA helicase"/>
    <property type="match status" value="1"/>
</dbReference>
<dbReference type="Gene3D" id="2.20.28.10">
    <property type="match status" value="1"/>
</dbReference>
<dbReference type="Gene3D" id="3.30.1640.10">
    <property type="entry name" value="mini-chromosome maintenance (MCM) complex, chain A, domain 1"/>
    <property type="match status" value="1"/>
</dbReference>
<dbReference type="Gene3D" id="2.40.50.140">
    <property type="entry name" value="Nucleic acid-binding proteins"/>
    <property type="match status" value="1"/>
</dbReference>
<dbReference type="Gene3D" id="3.40.50.300">
    <property type="entry name" value="P-loop containing nucleotide triphosphate hydrolases"/>
    <property type="match status" value="1"/>
</dbReference>
<dbReference type="InterPro" id="IPR003593">
    <property type="entry name" value="AAA+_ATPase"/>
</dbReference>
<dbReference type="InterPro" id="IPR031327">
    <property type="entry name" value="MCM"/>
</dbReference>
<dbReference type="InterPro" id="IPR008046">
    <property type="entry name" value="Mcm3"/>
</dbReference>
<dbReference type="InterPro" id="IPR018525">
    <property type="entry name" value="MCM_CS"/>
</dbReference>
<dbReference type="InterPro" id="IPR001208">
    <property type="entry name" value="MCM_dom"/>
</dbReference>
<dbReference type="InterPro" id="IPR041562">
    <property type="entry name" value="MCM_lid"/>
</dbReference>
<dbReference type="InterPro" id="IPR027925">
    <property type="entry name" value="MCM_N"/>
</dbReference>
<dbReference type="InterPro" id="IPR033762">
    <property type="entry name" value="MCM_OB"/>
</dbReference>
<dbReference type="InterPro" id="IPR012340">
    <property type="entry name" value="NA-bd_OB-fold"/>
</dbReference>
<dbReference type="InterPro" id="IPR027417">
    <property type="entry name" value="P-loop_NTPase"/>
</dbReference>
<dbReference type="InterPro" id="IPR056575">
    <property type="entry name" value="WH_MCM3_C"/>
</dbReference>
<dbReference type="PANTHER" id="PTHR11630">
    <property type="entry name" value="DNA REPLICATION LICENSING FACTOR MCM FAMILY MEMBER"/>
    <property type="match status" value="1"/>
</dbReference>
<dbReference type="PANTHER" id="PTHR11630:SF46">
    <property type="entry name" value="DNA REPLICATION LICENSING FACTOR MCM3-RELATED"/>
    <property type="match status" value="1"/>
</dbReference>
<dbReference type="Pfam" id="PF00493">
    <property type="entry name" value="MCM"/>
    <property type="match status" value="1"/>
</dbReference>
<dbReference type="Pfam" id="PF17855">
    <property type="entry name" value="MCM_lid"/>
    <property type="match status" value="1"/>
</dbReference>
<dbReference type="Pfam" id="PF14551">
    <property type="entry name" value="MCM_N"/>
    <property type="match status" value="1"/>
</dbReference>
<dbReference type="Pfam" id="PF17207">
    <property type="entry name" value="MCM_OB"/>
    <property type="match status" value="1"/>
</dbReference>
<dbReference type="Pfam" id="PF23191">
    <property type="entry name" value="WH_MCM3_C"/>
    <property type="match status" value="1"/>
</dbReference>
<dbReference type="PRINTS" id="PR01657">
    <property type="entry name" value="MCMFAMILY"/>
</dbReference>
<dbReference type="PRINTS" id="PR01659">
    <property type="entry name" value="MCMPROTEIN3"/>
</dbReference>
<dbReference type="SMART" id="SM00382">
    <property type="entry name" value="AAA"/>
    <property type="match status" value="1"/>
</dbReference>
<dbReference type="SMART" id="SM00350">
    <property type="entry name" value="MCM"/>
    <property type="match status" value="1"/>
</dbReference>
<dbReference type="SUPFAM" id="SSF50249">
    <property type="entry name" value="Nucleic acid-binding proteins"/>
    <property type="match status" value="1"/>
</dbReference>
<dbReference type="SUPFAM" id="SSF52540">
    <property type="entry name" value="P-loop containing nucleoside triphosphate hydrolases"/>
    <property type="match status" value="1"/>
</dbReference>
<dbReference type="PROSITE" id="PS00847">
    <property type="entry name" value="MCM_1"/>
    <property type="match status" value="1"/>
</dbReference>
<dbReference type="PROSITE" id="PS50051">
    <property type="entry name" value="MCM_2"/>
    <property type="match status" value="1"/>
</dbReference>
<proteinExistence type="evidence at transcript level"/>
<comment type="function">
    <text evidence="1">Probable component of the MCM2-7 complex (MCM complex) that may function as a DNA helicase and which is essential to undergo a single round of replication initiation and elongation per cell cycle in eukaryotic cells.</text>
</comment>
<comment type="catalytic activity">
    <reaction>
        <text>ATP + H2O = ADP + phosphate + H(+)</text>
        <dbReference type="Rhea" id="RHEA:13065"/>
        <dbReference type="ChEBI" id="CHEBI:15377"/>
        <dbReference type="ChEBI" id="CHEBI:15378"/>
        <dbReference type="ChEBI" id="CHEBI:30616"/>
        <dbReference type="ChEBI" id="CHEBI:43474"/>
        <dbReference type="ChEBI" id="CHEBI:456216"/>
        <dbReference type="EC" id="3.6.4.12"/>
    </reaction>
</comment>
<comment type="subunit">
    <text evidence="1">Component of the minichromosome maintenance (MCM) complex, a heterotetramer composed of MCM2, MCM3, MCM4, MCM5, MCM6 and MCM7.</text>
</comment>
<comment type="subcellular location">
    <subcellularLocation>
        <location evidence="3">Nucleus</location>
    </subcellularLocation>
</comment>
<comment type="similarity">
    <text evidence="3">Belongs to the MCM family.</text>
</comment>
<organism>
    <name type="scientific">Oryza sativa subsp. japonica</name>
    <name type="common">Rice</name>
    <dbReference type="NCBI Taxonomy" id="39947"/>
    <lineage>
        <taxon>Eukaryota</taxon>
        <taxon>Viridiplantae</taxon>
        <taxon>Streptophyta</taxon>
        <taxon>Embryophyta</taxon>
        <taxon>Tracheophyta</taxon>
        <taxon>Spermatophyta</taxon>
        <taxon>Magnoliopsida</taxon>
        <taxon>Liliopsida</taxon>
        <taxon>Poales</taxon>
        <taxon>Poaceae</taxon>
        <taxon>BOP clade</taxon>
        <taxon>Oryzoideae</taxon>
        <taxon>Oryzeae</taxon>
        <taxon>Oryzinae</taxon>
        <taxon>Oryza</taxon>
        <taxon>Oryza sativa</taxon>
    </lineage>
</organism>
<name>MCM3_ORYSJ</name>
<sequence>MDVNEEAMAAHKRAFLDFLDQDVGKGVYMQAVRDMVQNKRHRLIIGMDDLRNHSLDLARRVIRSPAEYMQPASDAVTEVARNLDPKFLKEGQRVLVGFSGPFGFHRVTPRDLMSSFIGTMVCVEGIVTKCSLVRPKVVKSVHYCPATGGTLSREYRDITSFVGLPTGSVYPTRDENGNLLVTEYGMCEYKDHQTLSMQEVPENSAPGQLPRTVDIIVEDDLVDSCKPGDRVSIVGVYKALPGKSKGSVSGVFRTVLIANNVSLMNKEANAPVYTREDLKRMKEISRRNDTFDLLGNSLAPSIYGHLWIKKAVVLLMLGGVEKNLKNGTHLRGDINMMMVGDPSVAKSQLLRAVMNIAPLAISTTGRGSSGVGLTAAVTSDQETGERRLEAGAMVLADRGVVCIDEFDKMNDQDRVAIHEVMEQQTVTIAKAGIHASLNARCSVIAAANPIYGTYDRSLTPTKNIGLPDSLLSRFDLLFIVLDQMDPEIDRQISEHVARMHRYCTDDGGARSLDKTGYAEEDDGDVNAAIFVKYDRMLHGQDRRRGKKSKQDRLTVKFLKKYIHYAKNLIQPRLTDEASDHIATSYAELRDGGANAKSGGGTLPITARTLETIIRLSTAHAKMKLRHEVLKTDVEAALQVLNFAIYHKELTEMEEREQREMEMKQQADHDAGASGGNADEHRSSGNDPMDVDVGNASNDQDVPAERIEAFEAILGQHVLANHLDQISIDEIEQTVNREAAAPYNRRQVEFILERMQDANRIMIRDGIVRII</sequence>
<keyword id="KW-0067">ATP-binding</keyword>
<keyword id="KW-0131">Cell cycle</keyword>
<keyword id="KW-0235">DNA replication</keyword>
<keyword id="KW-0238">DNA-binding</keyword>
<keyword id="KW-0347">Helicase</keyword>
<keyword id="KW-0378">Hydrolase</keyword>
<keyword id="KW-0547">Nucleotide-binding</keyword>
<keyword id="KW-0539">Nucleus</keyword>
<keyword id="KW-1185">Reference proteome</keyword>